<feature type="chain" id="PRO_0000360578" description="Putative single-strand DNA-specific exonuclease yorK">
    <location>
        <begin position="1"/>
        <end position="576"/>
    </location>
</feature>
<feature type="modified residue" description="Phosphotyrosine; by host" evidence="1">
    <location>
        <position position="473"/>
    </location>
</feature>
<protein>
    <recommendedName>
        <fullName>Putative single-strand DNA-specific exonuclease yorK</fullName>
        <ecNumber>3.1.-.-</ecNumber>
    </recommendedName>
</protein>
<name>YORK_BPSPB</name>
<proteinExistence type="inferred from homology"/>
<reference key="1">
    <citation type="journal article" date="1999" name="Microbiology">
        <title>Nucleotide sequence of the Bacillus subtilis temperate bacteriophage SPbetac2.</title>
        <authorList>
            <person name="Lazarevic V."/>
            <person name="Duesterhoeft A."/>
            <person name="Soldo B."/>
            <person name="Hilbert H."/>
            <person name="Mauel C."/>
            <person name="Karamata D."/>
        </authorList>
    </citation>
    <scope>NUCLEOTIDE SEQUENCE [LARGE SCALE GENOMIC DNA]</scope>
</reference>
<organism>
    <name type="scientific">Bacillus phage SPbeta</name>
    <name type="common">Bacillus phage SPBc2</name>
    <name type="synonym">Bacteriophage SP-beta</name>
    <dbReference type="NCBI Taxonomy" id="2932878"/>
    <lineage>
        <taxon>Viruses</taxon>
        <taxon>Duplodnaviria</taxon>
        <taxon>Heunggongvirae</taxon>
        <taxon>Uroviricota</taxon>
        <taxon>Caudoviricetes</taxon>
        <taxon>Spbetavirus</taxon>
        <taxon>Spbetavirus SPbeta</taxon>
    </lineage>
</organism>
<gene>
    <name type="primary">yorK</name>
</gene>
<accession>O64145</accession>
<sequence length="576" mass="65774">MEYRLIGDNDYNFDPLATILKNRGIEDPKLFVNVDQSSVIHYSKLNNIDKAADCLIRHLNNKNKLFVQVDSDVDGYTSSSIIINYIKKICPKANIHYRIQDGKEHGIFIDTIPDDVDLVIIPDAGSSQFEEHEALNKRGTEIIVIDHHECERVSEHAIVVNNQLSPNYSNKTLTGAGMAYKFCQAIDEKLNKNEAEQFLDLVSIGNIADSADSRNLETRYFMNEGLKKIKHPLLKKLFKKQEFSTKGDKSIQNTQFFINPLINAAIRVGSSEEKDQMMRAFLLSKEKVPYKKRGQSETELVSIHEDTVRILGNLKAKQKRIVDAAGVEIKNRIEEKSLTANKVLIVYIEGILDKSLTGLVANQLAEEYKKPVLLARNDPEKGKDILSGSIRGYDKGFIKDFKKELIDTGLFEFVEGHPNAAGFAIKRQNLILVNKVLNEKFKDINIEEDIQNVDFEIPAKRLRKEFILQLDGYKDYWGYKVEEPLIAITDLEIEVEQIEHLGKKNKTTVKFKHGDIEYIRFKSDENYFNQLTASNGTLVINVIGKAKANEYKGKKTPQIEIYELEVVRTKQKELVF</sequence>
<organismHost>
    <name type="scientific">Bacillus pumilus</name>
    <name type="common">Bacillus mesentericus</name>
    <dbReference type="NCBI Taxonomy" id="1408"/>
</organismHost>
<organismHost>
    <name type="scientific">Bacillus subtilis</name>
    <dbReference type="NCBI Taxonomy" id="1423"/>
</organismHost>
<evidence type="ECO:0000250" key="1"/>
<evidence type="ECO:0000305" key="2"/>
<comment type="function">
    <text evidence="2">Putative single-stranded-DNA-specific exonuclease.</text>
</comment>
<comment type="similarity">
    <text evidence="2">Belongs to the RecJ family.</text>
</comment>
<dbReference type="EC" id="3.1.-.-"/>
<dbReference type="EMBL" id="AF020713">
    <property type="protein sequence ID" value="AAC13105.1"/>
    <property type="molecule type" value="Genomic_DNA"/>
</dbReference>
<dbReference type="PIR" id="T12896">
    <property type="entry name" value="T12896"/>
</dbReference>
<dbReference type="RefSeq" id="NP_046684.1">
    <property type="nucleotide sequence ID" value="NC_001884.1"/>
</dbReference>
<dbReference type="SMR" id="O64145"/>
<dbReference type="GeneID" id="1261475"/>
<dbReference type="KEGG" id="vg:1261475"/>
<dbReference type="Proteomes" id="UP000009091">
    <property type="component" value="Genome"/>
</dbReference>
<dbReference type="GO" id="GO:0008409">
    <property type="term" value="F:5'-3' exonuclease activity"/>
    <property type="evidence" value="ECO:0007669"/>
    <property type="project" value="InterPro"/>
</dbReference>
<dbReference type="GO" id="GO:0006310">
    <property type="term" value="P:DNA recombination"/>
    <property type="evidence" value="ECO:0007669"/>
    <property type="project" value="InterPro"/>
</dbReference>
<dbReference type="GO" id="GO:0006281">
    <property type="term" value="P:DNA repair"/>
    <property type="evidence" value="ECO:0007669"/>
    <property type="project" value="InterPro"/>
</dbReference>
<dbReference type="Gene3D" id="3.10.310.30">
    <property type="match status" value="1"/>
</dbReference>
<dbReference type="Gene3D" id="3.90.1640.30">
    <property type="match status" value="1"/>
</dbReference>
<dbReference type="InterPro" id="IPR001667">
    <property type="entry name" value="DDH_dom"/>
</dbReference>
<dbReference type="InterPro" id="IPR038763">
    <property type="entry name" value="DHH_sf"/>
</dbReference>
<dbReference type="InterPro" id="IPR004610">
    <property type="entry name" value="RecJ"/>
</dbReference>
<dbReference type="InterPro" id="IPR041122">
    <property type="entry name" value="RecJ_OB"/>
</dbReference>
<dbReference type="InterPro" id="IPR051673">
    <property type="entry name" value="SSDNA_exonuclease_RecJ"/>
</dbReference>
<dbReference type="NCBIfam" id="TIGR00644">
    <property type="entry name" value="recJ"/>
    <property type="match status" value="1"/>
</dbReference>
<dbReference type="PANTHER" id="PTHR30255">
    <property type="entry name" value="SINGLE-STRANDED-DNA-SPECIFIC EXONUCLEASE RECJ"/>
    <property type="match status" value="1"/>
</dbReference>
<dbReference type="PANTHER" id="PTHR30255:SF2">
    <property type="entry name" value="SINGLE-STRANDED-DNA-SPECIFIC EXONUCLEASE RECJ"/>
    <property type="match status" value="1"/>
</dbReference>
<dbReference type="Pfam" id="PF01368">
    <property type="entry name" value="DHH"/>
    <property type="match status" value="1"/>
</dbReference>
<dbReference type="Pfam" id="PF17768">
    <property type="entry name" value="RecJ_OB"/>
    <property type="match status" value="1"/>
</dbReference>
<dbReference type="SUPFAM" id="SSF64182">
    <property type="entry name" value="DHH phosphoesterases"/>
    <property type="match status" value="1"/>
</dbReference>
<keyword id="KW-0269">Exonuclease</keyword>
<keyword id="KW-0378">Hydrolase</keyword>
<keyword id="KW-0540">Nuclease</keyword>
<keyword id="KW-0597">Phosphoprotein</keyword>
<keyword id="KW-1185">Reference proteome</keyword>